<dbReference type="EMBL" id="AB000111">
    <property type="protein sequence ID" value="BAA22462.1"/>
    <property type="molecule type" value="Genomic_DNA"/>
</dbReference>
<dbReference type="EMBL" id="AP008231">
    <property type="protein sequence ID" value="BAD80068.1"/>
    <property type="molecule type" value="Genomic_DNA"/>
</dbReference>
<dbReference type="RefSeq" id="WP_011244188.1">
    <property type="nucleotide sequence ID" value="NZ_CP085785.1"/>
</dbReference>
<dbReference type="SMR" id="O24702"/>
<dbReference type="GeneID" id="72431102"/>
<dbReference type="KEGG" id="syc:syc1878_d"/>
<dbReference type="eggNOG" id="COG0096">
    <property type="taxonomic scope" value="Bacteria"/>
</dbReference>
<dbReference type="Proteomes" id="UP000001175">
    <property type="component" value="Chromosome"/>
</dbReference>
<dbReference type="GO" id="GO:1990904">
    <property type="term" value="C:ribonucleoprotein complex"/>
    <property type="evidence" value="ECO:0007669"/>
    <property type="project" value="UniProtKB-KW"/>
</dbReference>
<dbReference type="GO" id="GO:0005840">
    <property type="term" value="C:ribosome"/>
    <property type="evidence" value="ECO:0007669"/>
    <property type="project" value="UniProtKB-KW"/>
</dbReference>
<dbReference type="GO" id="GO:0019843">
    <property type="term" value="F:rRNA binding"/>
    <property type="evidence" value="ECO:0007669"/>
    <property type="project" value="UniProtKB-UniRule"/>
</dbReference>
<dbReference type="GO" id="GO:0003735">
    <property type="term" value="F:structural constituent of ribosome"/>
    <property type="evidence" value="ECO:0007669"/>
    <property type="project" value="InterPro"/>
</dbReference>
<dbReference type="GO" id="GO:0006412">
    <property type="term" value="P:translation"/>
    <property type="evidence" value="ECO:0007669"/>
    <property type="project" value="UniProtKB-UniRule"/>
</dbReference>
<dbReference type="FunFam" id="3.30.1370.30:FF:000002">
    <property type="entry name" value="30S ribosomal protein S8"/>
    <property type="match status" value="1"/>
</dbReference>
<dbReference type="FunFam" id="3.30.1490.10:FF:000001">
    <property type="entry name" value="30S ribosomal protein S8"/>
    <property type="match status" value="1"/>
</dbReference>
<dbReference type="Gene3D" id="3.30.1370.30">
    <property type="match status" value="1"/>
</dbReference>
<dbReference type="Gene3D" id="3.30.1490.10">
    <property type="match status" value="1"/>
</dbReference>
<dbReference type="HAMAP" id="MF_01302_B">
    <property type="entry name" value="Ribosomal_uS8_B"/>
    <property type="match status" value="1"/>
</dbReference>
<dbReference type="InterPro" id="IPR000630">
    <property type="entry name" value="Ribosomal_uS8"/>
</dbReference>
<dbReference type="InterPro" id="IPR047863">
    <property type="entry name" value="Ribosomal_uS8_CS"/>
</dbReference>
<dbReference type="InterPro" id="IPR035987">
    <property type="entry name" value="Ribosomal_uS8_sf"/>
</dbReference>
<dbReference type="NCBIfam" id="NF001109">
    <property type="entry name" value="PRK00136.1"/>
    <property type="match status" value="1"/>
</dbReference>
<dbReference type="PANTHER" id="PTHR11758">
    <property type="entry name" value="40S RIBOSOMAL PROTEIN S15A"/>
    <property type="match status" value="1"/>
</dbReference>
<dbReference type="Pfam" id="PF00410">
    <property type="entry name" value="Ribosomal_S8"/>
    <property type="match status" value="1"/>
</dbReference>
<dbReference type="SUPFAM" id="SSF56047">
    <property type="entry name" value="Ribosomal protein S8"/>
    <property type="match status" value="1"/>
</dbReference>
<dbReference type="PROSITE" id="PS00053">
    <property type="entry name" value="RIBOSOMAL_S8"/>
    <property type="match status" value="1"/>
</dbReference>
<reference key="1">
    <citation type="journal article" date="1997" name="Gene">
        <title>Organization of a large gene cluster encoding ribosomal proteins in the cyanobacterium Synechococcus sp. strain PCC 6301: comparison of gene clusters among cyanobacteria, eubacteria and chloroplast genomes.</title>
        <authorList>
            <person name="Sugita M."/>
            <person name="Sugishita H."/>
            <person name="Fujishiro T."/>
            <person name="Tsuboi M."/>
            <person name="Sugita C."/>
            <person name="Endo T."/>
            <person name="Sugiura M."/>
        </authorList>
    </citation>
    <scope>NUCLEOTIDE SEQUENCE [GENOMIC DNA]</scope>
</reference>
<reference key="2">
    <citation type="journal article" date="2007" name="Photosyn. Res.">
        <title>Complete nucleotide sequence of the freshwater unicellular cyanobacterium Synechococcus elongatus PCC 6301 chromosome: gene content and organization.</title>
        <authorList>
            <person name="Sugita C."/>
            <person name="Ogata K."/>
            <person name="Shikata M."/>
            <person name="Jikuya H."/>
            <person name="Takano J."/>
            <person name="Furumichi M."/>
            <person name="Kanehisa M."/>
            <person name="Omata T."/>
            <person name="Sugiura M."/>
            <person name="Sugita M."/>
        </authorList>
    </citation>
    <scope>NUCLEOTIDE SEQUENCE [LARGE SCALE GENOMIC DNA]</scope>
    <source>
        <strain>ATCC 27144 / PCC 6301 / SAUG 1402/1</strain>
    </source>
</reference>
<organism>
    <name type="scientific">Synechococcus sp. (strain ATCC 27144 / PCC 6301 / SAUG 1402/1)</name>
    <name type="common">Anacystis nidulans</name>
    <dbReference type="NCBI Taxonomy" id="269084"/>
    <lineage>
        <taxon>Bacteria</taxon>
        <taxon>Bacillati</taxon>
        <taxon>Cyanobacteriota</taxon>
        <taxon>Cyanophyceae</taxon>
        <taxon>Synechococcales</taxon>
        <taxon>Synechococcaceae</taxon>
        <taxon>Synechococcus</taxon>
    </lineage>
</organism>
<protein>
    <recommendedName>
        <fullName evidence="1">Small ribosomal subunit protein uS8</fullName>
    </recommendedName>
    <alternativeName>
        <fullName evidence="2">30S ribosomal protein S8</fullName>
    </alternativeName>
</protein>
<keyword id="KW-0687">Ribonucleoprotein</keyword>
<keyword id="KW-0689">Ribosomal protein</keyword>
<keyword id="KW-0694">RNA-binding</keyword>
<keyword id="KW-0699">rRNA-binding</keyword>
<feature type="chain" id="PRO_0000126506" description="Small ribosomal subunit protein uS8">
    <location>
        <begin position="1"/>
        <end position="133"/>
    </location>
</feature>
<evidence type="ECO:0000255" key="1">
    <source>
        <dbReference type="HAMAP-Rule" id="MF_01302"/>
    </source>
</evidence>
<evidence type="ECO:0000305" key="2"/>
<gene>
    <name evidence="1" type="primary">rpsH</name>
    <name evidence="1" type="synonym">rps8</name>
    <name type="ordered locus">syc1878_d</name>
</gene>
<comment type="function">
    <text evidence="1">One of the primary rRNA binding proteins, it binds directly to 16S rRNA central domain where it helps coordinate assembly of the platform of the 30S subunit.</text>
</comment>
<comment type="subunit">
    <text evidence="1">Part of the 30S ribosomal subunit. Contacts proteins S5 and S12.</text>
</comment>
<comment type="similarity">
    <text evidence="1">Belongs to the universal ribosomal protein uS8 family.</text>
</comment>
<sequence length="133" mass="14682">MAVNDPIADMLTRIRNASEARHATTVVPASRLARSIAEVLKREGFIADFEESGEGVQRHLVLSLKYKGKNQQPIIKALKRVSKPGLRVYSNRRDLPRVLGGIGIAIISTSQGIMTDRDARRQGVGGEVLCYVW</sequence>
<name>RS8_SYNP6</name>
<accession>O24702</accession>
<proteinExistence type="inferred from homology"/>